<evidence type="ECO:0000255" key="1">
    <source>
        <dbReference type="HAMAP-Rule" id="MF_00095"/>
    </source>
</evidence>
<evidence type="ECO:0000305" key="2"/>
<feature type="chain" id="PRO_0000340157" description="Sugar fermentation stimulation protein homolog">
    <location>
        <begin position="1"/>
        <end position="249"/>
    </location>
</feature>
<keyword id="KW-1185">Reference proteome</keyword>
<sequence length="249" mass="27549">MPSVEVLRFEPLLEGVLQRRWKRFLSEVELAGGELVTAHCANTGPMTGVLHPGGRVRVRHDPSPKRKLAYTWEQAEMPGDGGWVGVNTALPNRLLRATIEAGLLEPWLGPIAGVRAEVTYGRERRSRIDLLLQPAPEADDQRPIYVEIKNTTWSAADLALFPDTVTERGQKHLEELMHVLPDARAVLIPCVSRSDVKRFAPGDSADPRYGELFRQAIDAGVEVVPCQFSFAADAVRFEGVLPVQRTESG</sequence>
<comment type="similarity">
    <text evidence="1">Belongs to the SfsA family.</text>
</comment>
<comment type="sequence caution" evidence="2">
    <conflict type="erroneous initiation">
        <sequence resource="EMBL-CDS" id="CAK29226"/>
    </conflict>
</comment>
<gene>
    <name evidence="1" type="primary">sfsA</name>
    <name type="ordered locus">SynRCC307_2323</name>
</gene>
<name>SFSA_SYNR3</name>
<proteinExistence type="inferred from homology"/>
<accession>A5GWG7</accession>
<organism>
    <name type="scientific">Synechococcus sp. (strain RCC307)</name>
    <dbReference type="NCBI Taxonomy" id="316278"/>
    <lineage>
        <taxon>Bacteria</taxon>
        <taxon>Bacillati</taxon>
        <taxon>Cyanobacteriota</taxon>
        <taxon>Cyanophyceae</taxon>
        <taxon>Synechococcales</taxon>
        <taxon>Synechococcaceae</taxon>
        <taxon>Synechococcus</taxon>
    </lineage>
</organism>
<dbReference type="EMBL" id="CT978603">
    <property type="protein sequence ID" value="CAK29226.1"/>
    <property type="status" value="ALT_INIT"/>
    <property type="molecule type" value="Genomic_DNA"/>
</dbReference>
<dbReference type="SMR" id="A5GWG7"/>
<dbReference type="STRING" id="316278.SynRCC307_2323"/>
<dbReference type="KEGG" id="syr:SynRCC307_2323"/>
<dbReference type="eggNOG" id="COG1489">
    <property type="taxonomic scope" value="Bacteria"/>
</dbReference>
<dbReference type="HOGENOM" id="CLU_052299_2_0_3"/>
<dbReference type="OrthoDB" id="9802365at2"/>
<dbReference type="Proteomes" id="UP000001115">
    <property type="component" value="Chromosome"/>
</dbReference>
<dbReference type="GO" id="GO:0003677">
    <property type="term" value="F:DNA binding"/>
    <property type="evidence" value="ECO:0007669"/>
    <property type="project" value="InterPro"/>
</dbReference>
<dbReference type="CDD" id="cd22359">
    <property type="entry name" value="SfsA-like_bacterial"/>
    <property type="match status" value="1"/>
</dbReference>
<dbReference type="Gene3D" id="2.40.50.580">
    <property type="match status" value="1"/>
</dbReference>
<dbReference type="Gene3D" id="3.40.1350.60">
    <property type="match status" value="1"/>
</dbReference>
<dbReference type="HAMAP" id="MF_00095">
    <property type="entry name" value="SfsA"/>
    <property type="match status" value="1"/>
</dbReference>
<dbReference type="InterPro" id="IPR005224">
    <property type="entry name" value="SfsA"/>
</dbReference>
<dbReference type="InterPro" id="IPR040452">
    <property type="entry name" value="SfsA_C"/>
</dbReference>
<dbReference type="InterPro" id="IPR041465">
    <property type="entry name" value="SfsA_N"/>
</dbReference>
<dbReference type="NCBIfam" id="TIGR00230">
    <property type="entry name" value="sfsA"/>
    <property type="match status" value="1"/>
</dbReference>
<dbReference type="PANTHER" id="PTHR30545">
    <property type="entry name" value="SUGAR FERMENTATION STIMULATION PROTEIN A"/>
    <property type="match status" value="1"/>
</dbReference>
<dbReference type="PANTHER" id="PTHR30545:SF2">
    <property type="entry name" value="SUGAR FERMENTATION STIMULATION PROTEIN A"/>
    <property type="match status" value="1"/>
</dbReference>
<dbReference type="Pfam" id="PF03749">
    <property type="entry name" value="SfsA"/>
    <property type="match status" value="1"/>
</dbReference>
<dbReference type="Pfam" id="PF17746">
    <property type="entry name" value="SfsA_N"/>
    <property type="match status" value="1"/>
</dbReference>
<reference key="1">
    <citation type="submission" date="2006-05" db="EMBL/GenBank/DDBJ databases">
        <authorList>
            <consortium name="Genoscope"/>
        </authorList>
    </citation>
    <scope>NUCLEOTIDE SEQUENCE [LARGE SCALE GENOMIC DNA]</scope>
    <source>
        <strain>RCC307</strain>
    </source>
</reference>
<protein>
    <recommendedName>
        <fullName evidence="1">Sugar fermentation stimulation protein homolog</fullName>
    </recommendedName>
</protein>